<comment type="function">
    <text evidence="1">Fluoride-specific ion channel. Important for reducing fluoride concentration in the cell, thus reducing its toxicity.</text>
</comment>
<comment type="catalytic activity">
    <reaction evidence="1">
        <text>fluoride(in) = fluoride(out)</text>
        <dbReference type="Rhea" id="RHEA:76159"/>
        <dbReference type="ChEBI" id="CHEBI:17051"/>
    </reaction>
    <physiologicalReaction direction="left-to-right" evidence="1">
        <dbReference type="Rhea" id="RHEA:76160"/>
    </physiologicalReaction>
</comment>
<comment type="activity regulation">
    <text evidence="1">Na(+) is not transported, but it plays an essential structural role and its presence is essential for fluoride channel function.</text>
</comment>
<comment type="subcellular location">
    <subcellularLocation>
        <location evidence="1">Cell inner membrane</location>
        <topology evidence="1">Multi-pass membrane protein</topology>
    </subcellularLocation>
</comment>
<comment type="similarity">
    <text evidence="1">Belongs to the fluoride channel Fluc/FEX (TC 1.A.43) family.</text>
</comment>
<keyword id="KW-0997">Cell inner membrane</keyword>
<keyword id="KW-1003">Cell membrane</keyword>
<keyword id="KW-0407">Ion channel</keyword>
<keyword id="KW-0406">Ion transport</keyword>
<keyword id="KW-0472">Membrane</keyword>
<keyword id="KW-0479">Metal-binding</keyword>
<keyword id="KW-0915">Sodium</keyword>
<keyword id="KW-0812">Transmembrane</keyword>
<keyword id="KW-1133">Transmembrane helix</keyword>
<keyword id="KW-0813">Transport</keyword>
<accession>B0TW03</accession>
<organism>
    <name type="scientific">Francisella philomiragia subsp. philomiragia (strain ATCC 25017 / CCUG 19701 / FSC 153 / O#319-036)</name>
    <dbReference type="NCBI Taxonomy" id="484022"/>
    <lineage>
        <taxon>Bacteria</taxon>
        <taxon>Pseudomonadati</taxon>
        <taxon>Pseudomonadota</taxon>
        <taxon>Gammaproteobacteria</taxon>
        <taxon>Thiotrichales</taxon>
        <taxon>Francisellaceae</taxon>
        <taxon>Francisella</taxon>
    </lineage>
</organism>
<sequence>MGLLLILVGIGGGLGAMSRFALTQATASISKQIPIGILLCNIIGSLIIGMMAAFLIQTKLFNEDISTYVRSLFVTGFLGGFTTFSSFSLDILNLLQRGEALLAISYILVSVIVSLIAVILGFYFIMGIYR</sequence>
<evidence type="ECO:0000255" key="1">
    <source>
        <dbReference type="HAMAP-Rule" id="MF_00454"/>
    </source>
</evidence>
<proteinExistence type="inferred from homology"/>
<feature type="chain" id="PRO_1000081013" description="Fluoride-specific ion channel FluC">
    <location>
        <begin position="1"/>
        <end position="130"/>
    </location>
</feature>
<feature type="transmembrane region" description="Helical" evidence="1">
    <location>
        <begin position="2"/>
        <end position="22"/>
    </location>
</feature>
<feature type="transmembrane region" description="Helical" evidence="1">
    <location>
        <begin position="35"/>
        <end position="55"/>
    </location>
</feature>
<feature type="transmembrane region" description="Helical" evidence="1">
    <location>
        <begin position="72"/>
        <end position="92"/>
    </location>
</feature>
<feature type="transmembrane region" description="Helical" evidence="1">
    <location>
        <begin position="107"/>
        <end position="127"/>
    </location>
</feature>
<feature type="binding site" evidence="1">
    <location>
        <position position="79"/>
    </location>
    <ligand>
        <name>Na(+)</name>
        <dbReference type="ChEBI" id="CHEBI:29101"/>
        <note>structural</note>
    </ligand>
</feature>
<feature type="binding site" evidence="1">
    <location>
        <position position="82"/>
    </location>
    <ligand>
        <name>Na(+)</name>
        <dbReference type="ChEBI" id="CHEBI:29101"/>
        <note>structural</note>
    </ligand>
</feature>
<reference key="1">
    <citation type="submission" date="2007-12" db="EMBL/GenBank/DDBJ databases">
        <title>Complete sequence of chromosome of Francisella philomiragia subsp. philomiragia ATCC 25017.</title>
        <authorList>
            <consortium name="US DOE Joint Genome Institute"/>
            <person name="Copeland A."/>
            <person name="Lucas S."/>
            <person name="Lapidus A."/>
            <person name="Barry K."/>
            <person name="Detter J.C."/>
            <person name="Glavina del Rio T."/>
            <person name="Hammon N."/>
            <person name="Israni S."/>
            <person name="Dalin E."/>
            <person name="Tice H."/>
            <person name="Pitluck S."/>
            <person name="Chain P."/>
            <person name="Malfatti S."/>
            <person name="Shin M."/>
            <person name="Vergez L."/>
            <person name="Schmutz J."/>
            <person name="Larimer F."/>
            <person name="Land M."/>
            <person name="Hauser L."/>
            <person name="Richardson P."/>
        </authorList>
    </citation>
    <scope>NUCLEOTIDE SEQUENCE [LARGE SCALE GENOMIC DNA]</scope>
    <source>
        <strain>ATCC 25017 / CCUG 19701 / FSC 153 / O#319-036</strain>
    </source>
</reference>
<protein>
    <recommendedName>
        <fullName evidence="1">Fluoride-specific ion channel FluC</fullName>
    </recommendedName>
</protein>
<name>FLUC_FRAP2</name>
<gene>
    <name evidence="1" type="primary">fluC</name>
    <name evidence="1" type="synonym">crcB</name>
    <name type="ordered locus">Fphi_0690</name>
</gene>
<dbReference type="EMBL" id="CP000937">
    <property type="protein sequence ID" value="ABZ86911.1"/>
    <property type="molecule type" value="Genomic_DNA"/>
</dbReference>
<dbReference type="SMR" id="B0TW03"/>
<dbReference type="KEGG" id="fph:Fphi_0690"/>
<dbReference type="eggNOG" id="COG0239">
    <property type="taxonomic scope" value="Bacteria"/>
</dbReference>
<dbReference type="HOGENOM" id="CLU_114342_2_3_6"/>
<dbReference type="GO" id="GO:0005886">
    <property type="term" value="C:plasma membrane"/>
    <property type="evidence" value="ECO:0007669"/>
    <property type="project" value="UniProtKB-SubCell"/>
</dbReference>
<dbReference type="GO" id="GO:0062054">
    <property type="term" value="F:fluoride channel activity"/>
    <property type="evidence" value="ECO:0007669"/>
    <property type="project" value="UniProtKB-UniRule"/>
</dbReference>
<dbReference type="GO" id="GO:0046872">
    <property type="term" value="F:metal ion binding"/>
    <property type="evidence" value="ECO:0007669"/>
    <property type="project" value="UniProtKB-KW"/>
</dbReference>
<dbReference type="GO" id="GO:0140114">
    <property type="term" value="P:cellular detoxification of fluoride"/>
    <property type="evidence" value="ECO:0007669"/>
    <property type="project" value="UniProtKB-UniRule"/>
</dbReference>
<dbReference type="HAMAP" id="MF_00454">
    <property type="entry name" value="FluC"/>
    <property type="match status" value="1"/>
</dbReference>
<dbReference type="InterPro" id="IPR003691">
    <property type="entry name" value="FluC"/>
</dbReference>
<dbReference type="NCBIfam" id="TIGR00494">
    <property type="entry name" value="crcB"/>
    <property type="match status" value="1"/>
</dbReference>
<dbReference type="PANTHER" id="PTHR28259">
    <property type="entry name" value="FLUORIDE EXPORT PROTEIN 1-RELATED"/>
    <property type="match status" value="1"/>
</dbReference>
<dbReference type="PANTHER" id="PTHR28259:SF18">
    <property type="entry name" value="FLUORIDE-SPECIFIC ION CHANNEL FLUC"/>
    <property type="match status" value="1"/>
</dbReference>
<dbReference type="Pfam" id="PF02537">
    <property type="entry name" value="CRCB"/>
    <property type="match status" value="1"/>
</dbReference>